<comment type="function">
    <text evidence="1">Component of the A-type ATP synthase that produces ATP from ADP in the presence of a proton gradient across the membrane.</text>
</comment>
<comment type="subunit">
    <text evidence="1">Has multiple subunits with at least A(3), B(3), C, D, E, F, H, I and proteolipid K(x).</text>
</comment>
<comment type="subcellular location">
    <subcellularLocation>
        <location evidence="1">Cell membrane</location>
        <topology evidence="1">Peripheral membrane protein</topology>
    </subcellularLocation>
</comment>
<comment type="similarity">
    <text evidence="1">Belongs to the V-ATPase E subunit family.</text>
</comment>
<gene>
    <name evidence="1" type="primary">atpE</name>
    <name type="ordered locus">UNCMA_10690</name>
    <name type="ORF">RCIX2027</name>
</gene>
<proteinExistence type="inferred from homology"/>
<keyword id="KW-0066">ATP synthesis</keyword>
<keyword id="KW-1003">Cell membrane</keyword>
<keyword id="KW-0375">Hydrogen ion transport</keyword>
<keyword id="KW-0406">Ion transport</keyword>
<keyword id="KW-0472">Membrane</keyword>
<keyword id="KW-1185">Reference proteome</keyword>
<keyword id="KW-0813">Transport</keyword>
<feature type="chain" id="PRO_1000059423" description="A-type ATP synthase subunit E">
    <location>
        <begin position="1"/>
        <end position="186"/>
    </location>
</feature>
<dbReference type="EMBL" id="AM114193">
    <property type="protein sequence ID" value="CAJ37177.1"/>
    <property type="molecule type" value="Genomic_DNA"/>
</dbReference>
<dbReference type="RefSeq" id="WP_012035397.1">
    <property type="nucleotide sequence ID" value="NC_009464.1"/>
</dbReference>
<dbReference type="SMR" id="Q0W366"/>
<dbReference type="STRING" id="351160.RCIX2027"/>
<dbReference type="GeneID" id="5143348"/>
<dbReference type="KEGG" id="rci:RCIX2027"/>
<dbReference type="PATRIC" id="fig|351160.9.peg.1104"/>
<dbReference type="eggNOG" id="arCOG00869">
    <property type="taxonomic scope" value="Archaea"/>
</dbReference>
<dbReference type="OrthoDB" id="4691at2157"/>
<dbReference type="Proteomes" id="UP000000663">
    <property type="component" value="Chromosome"/>
</dbReference>
<dbReference type="GO" id="GO:0005886">
    <property type="term" value="C:plasma membrane"/>
    <property type="evidence" value="ECO:0007669"/>
    <property type="project" value="UniProtKB-SubCell"/>
</dbReference>
<dbReference type="GO" id="GO:0033178">
    <property type="term" value="C:proton-transporting two-sector ATPase complex, catalytic domain"/>
    <property type="evidence" value="ECO:0007669"/>
    <property type="project" value="InterPro"/>
</dbReference>
<dbReference type="GO" id="GO:0005524">
    <property type="term" value="F:ATP binding"/>
    <property type="evidence" value="ECO:0007669"/>
    <property type="project" value="UniProtKB-UniRule"/>
</dbReference>
<dbReference type="GO" id="GO:0046933">
    <property type="term" value="F:proton-transporting ATP synthase activity, rotational mechanism"/>
    <property type="evidence" value="ECO:0007669"/>
    <property type="project" value="UniProtKB-UniRule"/>
</dbReference>
<dbReference type="GO" id="GO:0046961">
    <property type="term" value="F:proton-transporting ATPase activity, rotational mechanism"/>
    <property type="evidence" value="ECO:0007669"/>
    <property type="project" value="InterPro"/>
</dbReference>
<dbReference type="GO" id="GO:0042777">
    <property type="term" value="P:proton motive force-driven plasma membrane ATP synthesis"/>
    <property type="evidence" value="ECO:0007669"/>
    <property type="project" value="UniProtKB-UniRule"/>
</dbReference>
<dbReference type="Gene3D" id="3.30.2320.30">
    <property type="entry name" value="ATP synthase, E subunit, C-terminal"/>
    <property type="match status" value="1"/>
</dbReference>
<dbReference type="HAMAP" id="MF_00311">
    <property type="entry name" value="ATP_synth_E_arch"/>
    <property type="match status" value="1"/>
</dbReference>
<dbReference type="InterPro" id="IPR038495">
    <property type="entry name" value="ATPase_E_C"/>
</dbReference>
<dbReference type="InterPro" id="IPR002842">
    <property type="entry name" value="ATPase_V1_Esu"/>
</dbReference>
<dbReference type="Pfam" id="PF01991">
    <property type="entry name" value="vATP-synt_E"/>
    <property type="match status" value="1"/>
</dbReference>
<dbReference type="SUPFAM" id="SSF160527">
    <property type="entry name" value="V-type ATPase subunit E-like"/>
    <property type="match status" value="1"/>
</dbReference>
<sequence length="186" mass="20231">MGLDKVVKDIMDKAEADSRDITAKAAAEAAEIKKSAEAEAKQIIAAENARAEQAISKMRQRELSSAKLDVKKAKLNSEKDVLAETHEAFVRQLSTLPREKKADLLQKLVKLAKKDIPQGKIFTNAADADLVKDSGYEYGGNVKCIGGIVVTSVDGSVNLDYTFDSILEDVWTSSMKPVSDILFGSR</sequence>
<name>AATE_METAR</name>
<organism>
    <name type="scientific">Methanocella arvoryzae (strain DSM 22066 / NBRC 105507 / MRE50)</name>
    <dbReference type="NCBI Taxonomy" id="351160"/>
    <lineage>
        <taxon>Archaea</taxon>
        <taxon>Methanobacteriati</taxon>
        <taxon>Methanobacteriota</taxon>
        <taxon>Stenosarchaea group</taxon>
        <taxon>Methanomicrobia</taxon>
        <taxon>Methanocellales</taxon>
        <taxon>Methanocellaceae</taxon>
        <taxon>Methanocella</taxon>
    </lineage>
</organism>
<reference key="1">
    <citation type="journal article" date="2006" name="Science">
        <title>Genome of rice cluster I archaea -- the key methane producers in the rice rhizosphere.</title>
        <authorList>
            <person name="Erkel C."/>
            <person name="Kube M."/>
            <person name="Reinhardt R."/>
            <person name="Liesack W."/>
        </authorList>
    </citation>
    <scope>NUCLEOTIDE SEQUENCE [LARGE SCALE GENOMIC DNA]</scope>
    <source>
        <strain>DSM 22066 / NBRC 105507 / MRE50</strain>
    </source>
</reference>
<accession>Q0W366</accession>
<protein>
    <recommendedName>
        <fullName evidence="1">A-type ATP synthase subunit E</fullName>
    </recommendedName>
</protein>
<evidence type="ECO:0000255" key="1">
    <source>
        <dbReference type="HAMAP-Rule" id="MF_00311"/>
    </source>
</evidence>